<evidence type="ECO:0000250" key="1">
    <source>
        <dbReference type="UniProtKB" id="P23396"/>
    </source>
</evidence>
<evidence type="ECO:0000255" key="2">
    <source>
        <dbReference type="PROSITE-ProRule" id="PRU00118"/>
    </source>
</evidence>
<evidence type="ECO:0000256" key="3">
    <source>
        <dbReference type="SAM" id="MobiDB-lite"/>
    </source>
</evidence>
<evidence type="ECO:0000269" key="4">
    <source>
    </source>
</evidence>
<evidence type="ECO:0000269" key="5">
    <source>
    </source>
</evidence>
<evidence type="ECO:0000269" key="6">
    <source>
    </source>
</evidence>
<evidence type="ECO:0000269" key="7">
    <source>
    </source>
</evidence>
<evidence type="ECO:0000269" key="8">
    <source>
    </source>
</evidence>
<evidence type="ECO:0000305" key="9"/>
<evidence type="ECO:0007744" key="10">
    <source>
        <dbReference type="PDB" id="7CPU"/>
    </source>
</evidence>
<evidence type="ECO:0007744" key="11">
    <source>
        <dbReference type="PDB" id="7CPV"/>
    </source>
</evidence>
<evidence type="ECO:0007744" key="12">
    <source>
    </source>
</evidence>
<evidence type="ECO:0007744" key="13">
    <source>
    </source>
</evidence>
<evidence type="ECO:0007744" key="14">
    <source>
    </source>
</evidence>
<name>RS3_MOUSE</name>
<sequence>MAVQISKKRKFVADGIFKAELNEFLTRELAEDGYSGVEVRVTPTRTEIIILATRTQNVLGEKGRRIRELTAVVQKRFGFPEGSVELYAEKVATRGLCAIAQAESLRYKLLGGLAVRRACYGVLRFIMESGAKGCEVVVSGKLRGQRAKSMKFVDGLMIHSGDPVNYYVDTAVRHVLLRQGVLGIKVKIMLPWDPSGKIGPKKPLPDHVSIVEPKDEILPTTPISEQKGGKPEPPAMPQPVPTA</sequence>
<dbReference type="EC" id="4.2.99.18" evidence="8"/>
<dbReference type="EMBL" id="X76772">
    <property type="protein sequence ID" value="CAA54167.1"/>
    <property type="molecule type" value="mRNA"/>
</dbReference>
<dbReference type="EMBL" id="BC010721">
    <property type="protein sequence ID" value="AAH10721.1"/>
    <property type="molecule type" value="mRNA"/>
</dbReference>
<dbReference type="CCDS" id="CCDS40031.1"/>
<dbReference type="PIR" id="S41170">
    <property type="entry name" value="S41170"/>
</dbReference>
<dbReference type="RefSeq" id="NP_036182.1">
    <property type="nucleotide sequence ID" value="NM_012052.2"/>
</dbReference>
<dbReference type="PDB" id="7CPU">
    <property type="method" value="EM"/>
    <property type="resolution" value="2.82 A"/>
    <property type="chains" value="SD=1-243"/>
</dbReference>
<dbReference type="PDB" id="7CPV">
    <property type="method" value="EM"/>
    <property type="resolution" value="3.03 A"/>
    <property type="chains" value="SD=1-243"/>
</dbReference>
<dbReference type="PDB" id="7LS1">
    <property type="method" value="EM"/>
    <property type="resolution" value="3.30 A"/>
    <property type="chains" value="q2=1-243"/>
</dbReference>
<dbReference type="PDB" id="7LS2">
    <property type="method" value="EM"/>
    <property type="resolution" value="3.10 A"/>
    <property type="chains" value="q2=1-243"/>
</dbReference>
<dbReference type="PDBsum" id="7CPU"/>
<dbReference type="PDBsum" id="7CPV"/>
<dbReference type="PDBsum" id="7LS1"/>
<dbReference type="PDBsum" id="7LS2"/>
<dbReference type="BMRB" id="P62908"/>
<dbReference type="EMDB" id="EMD-23500"/>
<dbReference type="EMDB" id="EMD-23501"/>
<dbReference type="EMDB" id="EMD-30432"/>
<dbReference type="EMDB" id="EMD-30433"/>
<dbReference type="SMR" id="P62908"/>
<dbReference type="BioGRID" id="205106">
    <property type="interactions" value="134"/>
</dbReference>
<dbReference type="ComplexPortal" id="CPX-5261">
    <property type="entry name" value="40S cytosolic small ribosomal subunit"/>
</dbReference>
<dbReference type="CORUM" id="P62908"/>
<dbReference type="FunCoup" id="P62908">
    <property type="interactions" value="2668"/>
</dbReference>
<dbReference type="IntAct" id="P62908">
    <property type="interactions" value="10"/>
</dbReference>
<dbReference type="MINT" id="P62908"/>
<dbReference type="STRING" id="10090.ENSMUSP00000032998"/>
<dbReference type="GlyGen" id="P62908">
    <property type="glycosylation" value="2 sites, 1 O-linked glycan (2 sites)"/>
</dbReference>
<dbReference type="iPTMnet" id="P62908"/>
<dbReference type="MetOSite" id="P62908"/>
<dbReference type="PhosphoSitePlus" id="P62908"/>
<dbReference type="SwissPalm" id="P62908"/>
<dbReference type="CPTAC" id="non-CPTAC-3873"/>
<dbReference type="jPOST" id="P62908"/>
<dbReference type="PaxDb" id="10090-ENSMUSP00000032998"/>
<dbReference type="PeptideAtlas" id="P62908"/>
<dbReference type="ProteomicsDB" id="260854"/>
<dbReference type="Pumba" id="P62908"/>
<dbReference type="DNASU" id="27050"/>
<dbReference type="Ensembl" id="ENSMUST00000032998.13">
    <property type="protein sequence ID" value="ENSMUSP00000032998.7"/>
    <property type="gene ID" value="ENSMUSG00000030744.14"/>
</dbReference>
<dbReference type="GeneID" id="27050"/>
<dbReference type="KEGG" id="mmu:27050"/>
<dbReference type="UCSC" id="uc009ilr.2">
    <property type="organism name" value="mouse"/>
</dbReference>
<dbReference type="AGR" id="MGI:1350917"/>
<dbReference type="CTD" id="6188"/>
<dbReference type="MGI" id="MGI:1350917">
    <property type="gene designation" value="Rps3"/>
</dbReference>
<dbReference type="VEuPathDB" id="HostDB:ENSMUSG00000030744"/>
<dbReference type="eggNOG" id="KOG3181">
    <property type="taxonomic scope" value="Eukaryota"/>
</dbReference>
<dbReference type="GeneTree" id="ENSGT00390000008610"/>
<dbReference type="HOGENOM" id="CLU_058591_2_1_1"/>
<dbReference type="InParanoid" id="P62908"/>
<dbReference type="OMA" id="NKKKWMI"/>
<dbReference type="OrthoDB" id="10248446at2759"/>
<dbReference type="PhylomeDB" id="P62908"/>
<dbReference type="TreeFam" id="TF300901"/>
<dbReference type="Reactome" id="R-MMU-156827">
    <property type="pathway name" value="L13a-mediated translational silencing of Ceruloplasmin expression"/>
</dbReference>
<dbReference type="Reactome" id="R-MMU-1799339">
    <property type="pathway name" value="SRP-dependent cotranslational protein targeting to membrane"/>
</dbReference>
<dbReference type="Reactome" id="R-MMU-6791226">
    <property type="pathway name" value="Major pathway of rRNA processing in the nucleolus and cytosol"/>
</dbReference>
<dbReference type="Reactome" id="R-MMU-72649">
    <property type="pathway name" value="Translation initiation complex formation"/>
</dbReference>
<dbReference type="Reactome" id="R-MMU-72689">
    <property type="pathway name" value="Formation of a pool of free 40S subunits"/>
</dbReference>
<dbReference type="Reactome" id="R-MMU-72695">
    <property type="pathway name" value="Formation of the ternary complex, and subsequently, the 43S complex"/>
</dbReference>
<dbReference type="Reactome" id="R-MMU-72702">
    <property type="pathway name" value="Ribosomal scanning and start codon recognition"/>
</dbReference>
<dbReference type="Reactome" id="R-MMU-72706">
    <property type="pathway name" value="GTP hydrolysis and joining of the 60S ribosomal subunit"/>
</dbReference>
<dbReference type="Reactome" id="R-MMU-975956">
    <property type="pathway name" value="Nonsense Mediated Decay (NMD) independent of the Exon Junction Complex (EJC)"/>
</dbReference>
<dbReference type="Reactome" id="R-MMU-975957">
    <property type="pathway name" value="Nonsense Mediated Decay (NMD) enhanced by the Exon Junction Complex (EJC)"/>
</dbReference>
<dbReference type="BioGRID-ORCS" id="27050">
    <property type="hits" value="34 hits in 103 CRISPR screens"/>
</dbReference>
<dbReference type="CD-CODE" id="CE726F99">
    <property type="entry name" value="Postsynaptic density"/>
</dbReference>
<dbReference type="ChiTaRS" id="Rps3">
    <property type="organism name" value="mouse"/>
</dbReference>
<dbReference type="PRO" id="PR:P62908"/>
<dbReference type="Proteomes" id="UP000000589">
    <property type="component" value="Chromosome 7"/>
</dbReference>
<dbReference type="RNAct" id="P62908">
    <property type="molecule type" value="protein"/>
</dbReference>
<dbReference type="Bgee" id="ENSMUSG00000030744">
    <property type="expression patterns" value="Expressed in ear vesicle and 139 other cell types or tissues"/>
</dbReference>
<dbReference type="ExpressionAtlas" id="P62908">
    <property type="expression patterns" value="baseline and differential"/>
</dbReference>
<dbReference type="GO" id="GO:0005737">
    <property type="term" value="C:cytoplasm"/>
    <property type="evidence" value="ECO:0000314"/>
    <property type="project" value="MGI"/>
</dbReference>
<dbReference type="GO" id="GO:0005829">
    <property type="term" value="C:cytosol"/>
    <property type="evidence" value="ECO:0000304"/>
    <property type="project" value="Reactome"/>
</dbReference>
<dbReference type="GO" id="GO:0022627">
    <property type="term" value="C:cytosolic small ribosomal subunit"/>
    <property type="evidence" value="ECO:0000314"/>
    <property type="project" value="UniProtKB"/>
</dbReference>
<dbReference type="GO" id="GO:0005783">
    <property type="term" value="C:endoplasmic reticulum"/>
    <property type="evidence" value="ECO:0007669"/>
    <property type="project" value="Ensembl"/>
</dbReference>
<dbReference type="GO" id="GO:0005743">
    <property type="term" value="C:mitochondrial inner membrane"/>
    <property type="evidence" value="ECO:0007669"/>
    <property type="project" value="UniProtKB-SubCell"/>
</dbReference>
<dbReference type="GO" id="GO:0005759">
    <property type="term" value="C:mitochondrial matrix"/>
    <property type="evidence" value="ECO:0007669"/>
    <property type="project" value="Ensembl"/>
</dbReference>
<dbReference type="GO" id="GO:0072686">
    <property type="term" value="C:mitotic spindle"/>
    <property type="evidence" value="ECO:0007669"/>
    <property type="project" value="Ensembl"/>
</dbReference>
<dbReference type="GO" id="GO:0071159">
    <property type="term" value="C:NF-kappaB complex"/>
    <property type="evidence" value="ECO:0007669"/>
    <property type="project" value="Ensembl"/>
</dbReference>
<dbReference type="GO" id="GO:0005730">
    <property type="term" value="C:nucleolus"/>
    <property type="evidence" value="ECO:0007669"/>
    <property type="project" value="UniProtKB-SubCell"/>
</dbReference>
<dbReference type="GO" id="GO:0098794">
    <property type="term" value="C:postsynapse"/>
    <property type="evidence" value="ECO:0000303"/>
    <property type="project" value="SynGO"/>
</dbReference>
<dbReference type="GO" id="GO:0014069">
    <property type="term" value="C:postsynaptic density"/>
    <property type="evidence" value="ECO:0007669"/>
    <property type="project" value="Ensembl"/>
</dbReference>
<dbReference type="GO" id="GO:1990904">
    <property type="term" value="C:ribonucleoprotein complex"/>
    <property type="evidence" value="ECO:0000250"/>
    <property type="project" value="UniProtKB"/>
</dbReference>
<dbReference type="GO" id="GO:0005840">
    <property type="term" value="C:ribosome"/>
    <property type="evidence" value="ECO:0000303"/>
    <property type="project" value="SynGO"/>
</dbReference>
<dbReference type="GO" id="GO:0032587">
    <property type="term" value="C:ruffle membrane"/>
    <property type="evidence" value="ECO:0007669"/>
    <property type="project" value="Ensembl"/>
</dbReference>
<dbReference type="GO" id="GO:0045202">
    <property type="term" value="C:synapse"/>
    <property type="evidence" value="ECO:0000314"/>
    <property type="project" value="SynGO"/>
</dbReference>
<dbReference type="GO" id="GO:0140078">
    <property type="term" value="F:class I DNA-(apurinic or apyrimidinic site) endonuclease activity"/>
    <property type="evidence" value="ECO:0007669"/>
    <property type="project" value="UniProtKB-EC"/>
</dbReference>
<dbReference type="GO" id="GO:0004520">
    <property type="term" value="F:DNA endonuclease activity"/>
    <property type="evidence" value="ECO:0007669"/>
    <property type="project" value="Ensembl"/>
</dbReference>
<dbReference type="GO" id="GO:0003906">
    <property type="term" value="F:DNA-(apurinic or apyrimidinic site) endonuclease activity"/>
    <property type="evidence" value="ECO:0000314"/>
    <property type="project" value="UniProtKB"/>
</dbReference>
<dbReference type="GO" id="GO:0140297">
    <property type="term" value="F:DNA-binding transcription factor binding"/>
    <property type="evidence" value="ECO:0007669"/>
    <property type="project" value="Ensembl"/>
</dbReference>
<dbReference type="GO" id="GO:0030544">
    <property type="term" value="F:Hsp70 protein binding"/>
    <property type="evidence" value="ECO:0007669"/>
    <property type="project" value="Ensembl"/>
</dbReference>
<dbReference type="GO" id="GO:0051879">
    <property type="term" value="F:Hsp90 protein binding"/>
    <property type="evidence" value="ECO:0007669"/>
    <property type="project" value="Ensembl"/>
</dbReference>
<dbReference type="GO" id="GO:0008017">
    <property type="term" value="F:microtubule binding"/>
    <property type="evidence" value="ECO:0007669"/>
    <property type="project" value="Ensembl"/>
</dbReference>
<dbReference type="GO" id="GO:0003729">
    <property type="term" value="F:mRNA binding"/>
    <property type="evidence" value="ECO:0007669"/>
    <property type="project" value="Ensembl"/>
</dbReference>
<dbReference type="GO" id="GO:0032357">
    <property type="term" value="F:oxidized purine DNA binding"/>
    <property type="evidence" value="ECO:0007669"/>
    <property type="project" value="Ensembl"/>
</dbReference>
<dbReference type="GO" id="GO:0032358">
    <property type="term" value="F:oxidized pyrimidine DNA binding"/>
    <property type="evidence" value="ECO:0007669"/>
    <property type="project" value="Ensembl"/>
</dbReference>
<dbReference type="GO" id="GO:0051018">
    <property type="term" value="F:protein kinase A binding"/>
    <property type="evidence" value="ECO:0007669"/>
    <property type="project" value="Ensembl"/>
</dbReference>
<dbReference type="GO" id="GO:0019901">
    <property type="term" value="F:protein kinase binding"/>
    <property type="evidence" value="ECO:0007669"/>
    <property type="project" value="Ensembl"/>
</dbReference>
<dbReference type="GO" id="GO:0044877">
    <property type="term" value="F:protein-containing complex binding"/>
    <property type="evidence" value="ECO:0007669"/>
    <property type="project" value="Ensembl"/>
</dbReference>
<dbReference type="GO" id="GO:0000977">
    <property type="term" value="F:RNA polymerase II transcription regulatory region sequence-specific DNA binding"/>
    <property type="evidence" value="ECO:0007669"/>
    <property type="project" value="Ensembl"/>
</dbReference>
<dbReference type="GO" id="GO:0070181">
    <property type="term" value="F:small ribosomal subunit rRNA binding"/>
    <property type="evidence" value="ECO:0007669"/>
    <property type="project" value="Ensembl"/>
</dbReference>
<dbReference type="GO" id="GO:0003735">
    <property type="term" value="F:structural constituent of ribosome"/>
    <property type="evidence" value="ECO:0000314"/>
    <property type="project" value="UniProtKB"/>
</dbReference>
<dbReference type="GO" id="GO:0097100">
    <property type="term" value="F:supercoiled DNA binding"/>
    <property type="evidence" value="ECO:0007669"/>
    <property type="project" value="Ensembl"/>
</dbReference>
<dbReference type="GO" id="GO:0044390">
    <property type="term" value="F:ubiquitin-like protein conjugating enzyme binding"/>
    <property type="evidence" value="ECO:0007669"/>
    <property type="project" value="Ensembl"/>
</dbReference>
<dbReference type="GO" id="GO:0006915">
    <property type="term" value="P:apoptotic process"/>
    <property type="evidence" value="ECO:0007669"/>
    <property type="project" value="UniProtKB-KW"/>
</dbReference>
<dbReference type="GO" id="GO:0006284">
    <property type="term" value="P:base-excision repair"/>
    <property type="evidence" value="ECO:0007669"/>
    <property type="project" value="Ensembl"/>
</dbReference>
<dbReference type="GO" id="GO:0051301">
    <property type="term" value="P:cell division"/>
    <property type="evidence" value="ECO:0007669"/>
    <property type="project" value="UniProtKB-KW"/>
</dbReference>
<dbReference type="GO" id="GO:0070301">
    <property type="term" value="P:cellular response to hydrogen peroxide"/>
    <property type="evidence" value="ECO:0007669"/>
    <property type="project" value="Ensembl"/>
</dbReference>
<dbReference type="GO" id="GO:0071356">
    <property type="term" value="P:cellular response to tumor necrosis factor"/>
    <property type="evidence" value="ECO:0007669"/>
    <property type="project" value="Ensembl"/>
</dbReference>
<dbReference type="GO" id="GO:0002181">
    <property type="term" value="P:cytoplasmic translation"/>
    <property type="evidence" value="ECO:0000303"/>
    <property type="project" value="ComplexPortal"/>
</dbReference>
<dbReference type="GO" id="GO:0045738">
    <property type="term" value="P:negative regulation of DNA repair"/>
    <property type="evidence" value="ECO:0007669"/>
    <property type="project" value="Ensembl"/>
</dbReference>
<dbReference type="GO" id="GO:0031397">
    <property type="term" value="P:negative regulation of protein ubiquitination"/>
    <property type="evidence" value="ECO:0007669"/>
    <property type="project" value="Ensembl"/>
</dbReference>
<dbReference type="GO" id="GO:0017148">
    <property type="term" value="P:negative regulation of translation"/>
    <property type="evidence" value="ECO:0007669"/>
    <property type="project" value="Ensembl"/>
</dbReference>
<dbReference type="GO" id="GO:0042104">
    <property type="term" value="P:positive regulation of activated T cell proliferation"/>
    <property type="evidence" value="ECO:0007669"/>
    <property type="project" value="Ensembl"/>
</dbReference>
<dbReference type="GO" id="GO:1905053">
    <property type="term" value="P:positive regulation of base-excision repair"/>
    <property type="evidence" value="ECO:0007669"/>
    <property type="project" value="Ensembl"/>
</dbReference>
<dbReference type="GO" id="GO:0032743">
    <property type="term" value="P:positive regulation of interleukin-2 production"/>
    <property type="evidence" value="ECO:0007669"/>
    <property type="project" value="Ensembl"/>
</dbReference>
<dbReference type="GO" id="GO:1902231">
    <property type="term" value="P:positive regulation of intrinsic apoptotic signaling pathway in response to DNA damage"/>
    <property type="evidence" value="ECO:0007669"/>
    <property type="project" value="Ensembl"/>
</dbReference>
<dbReference type="GO" id="GO:0031116">
    <property type="term" value="P:positive regulation of microtubule polymerization"/>
    <property type="evidence" value="ECO:0007669"/>
    <property type="project" value="Ensembl"/>
</dbReference>
<dbReference type="GO" id="GO:0051092">
    <property type="term" value="P:positive regulation of NF-kappaB transcription factor activity"/>
    <property type="evidence" value="ECO:0000315"/>
    <property type="project" value="CAFA"/>
</dbReference>
<dbReference type="GO" id="GO:1901224">
    <property type="term" value="P:positive regulation of non-canonical NF-kappaB signal transduction"/>
    <property type="evidence" value="ECO:0007669"/>
    <property type="project" value="Ensembl"/>
</dbReference>
<dbReference type="GO" id="GO:0031334">
    <property type="term" value="P:positive regulation of protein-containing complex assembly"/>
    <property type="evidence" value="ECO:0000315"/>
    <property type="project" value="CAFA"/>
</dbReference>
<dbReference type="GO" id="GO:0050862">
    <property type="term" value="P:positive regulation of T cell receptor signaling pathway"/>
    <property type="evidence" value="ECO:0007669"/>
    <property type="project" value="Ensembl"/>
</dbReference>
<dbReference type="GO" id="GO:0061481">
    <property type="term" value="P:response to TNF agonist"/>
    <property type="evidence" value="ECO:0007669"/>
    <property type="project" value="Ensembl"/>
</dbReference>
<dbReference type="GO" id="GO:0051225">
    <property type="term" value="P:spindle assembly"/>
    <property type="evidence" value="ECO:0007669"/>
    <property type="project" value="Ensembl"/>
</dbReference>
<dbReference type="CDD" id="cd02413">
    <property type="entry name" value="KH-II_40S_S3"/>
    <property type="match status" value="1"/>
</dbReference>
<dbReference type="FunFam" id="3.30.1140.32:FF:000005">
    <property type="entry name" value="40S ribosomal protein S3"/>
    <property type="match status" value="1"/>
</dbReference>
<dbReference type="FunFam" id="3.30.300.20:FF:000006">
    <property type="entry name" value="40S ribosomal protein S3"/>
    <property type="match status" value="1"/>
</dbReference>
<dbReference type="Gene3D" id="3.30.300.20">
    <property type="match status" value="1"/>
</dbReference>
<dbReference type="Gene3D" id="3.30.1140.32">
    <property type="entry name" value="Ribosomal protein S3, C-terminal domain"/>
    <property type="match status" value="1"/>
</dbReference>
<dbReference type="InterPro" id="IPR015946">
    <property type="entry name" value="KH_dom-like_a/b"/>
</dbReference>
<dbReference type="InterPro" id="IPR004044">
    <property type="entry name" value="KH_dom_type_2"/>
</dbReference>
<dbReference type="InterPro" id="IPR009019">
    <property type="entry name" value="KH_sf_prok-type"/>
</dbReference>
<dbReference type="InterPro" id="IPR036419">
    <property type="entry name" value="Ribosomal_S3_C_sf"/>
</dbReference>
<dbReference type="InterPro" id="IPR001351">
    <property type="entry name" value="Ribosomal_uS3_C"/>
</dbReference>
<dbReference type="InterPro" id="IPR018280">
    <property type="entry name" value="Ribosomal_uS3_CS"/>
</dbReference>
<dbReference type="InterPro" id="IPR005703">
    <property type="entry name" value="Ribosomal_uS3_euk/arc"/>
</dbReference>
<dbReference type="NCBIfam" id="NF003219">
    <property type="entry name" value="PRK04191.1"/>
    <property type="match status" value="1"/>
</dbReference>
<dbReference type="NCBIfam" id="TIGR01008">
    <property type="entry name" value="uS3_euk_arch"/>
    <property type="match status" value="1"/>
</dbReference>
<dbReference type="PANTHER" id="PTHR11760">
    <property type="entry name" value="30S/40S RIBOSOMAL PROTEIN S3"/>
    <property type="match status" value="1"/>
</dbReference>
<dbReference type="PANTHER" id="PTHR11760:SF32">
    <property type="entry name" value="SMALL RIBOSOMAL SUBUNIT PROTEIN US3"/>
    <property type="match status" value="1"/>
</dbReference>
<dbReference type="Pfam" id="PF07650">
    <property type="entry name" value="KH_2"/>
    <property type="match status" value="1"/>
</dbReference>
<dbReference type="Pfam" id="PF00189">
    <property type="entry name" value="Ribosomal_S3_C"/>
    <property type="match status" value="1"/>
</dbReference>
<dbReference type="SUPFAM" id="SSF54814">
    <property type="entry name" value="Prokaryotic type KH domain (KH-domain type II)"/>
    <property type="match status" value="1"/>
</dbReference>
<dbReference type="SUPFAM" id="SSF54821">
    <property type="entry name" value="Ribosomal protein S3 C-terminal domain"/>
    <property type="match status" value="1"/>
</dbReference>
<dbReference type="PROSITE" id="PS50823">
    <property type="entry name" value="KH_TYPE_2"/>
    <property type="match status" value="1"/>
</dbReference>
<dbReference type="PROSITE" id="PS00548">
    <property type="entry name" value="RIBOSOMAL_S3"/>
    <property type="match status" value="1"/>
</dbReference>
<keyword id="KW-0002">3D-structure</keyword>
<keyword id="KW-0007">Acetylation</keyword>
<keyword id="KW-0053">Apoptosis</keyword>
<keyword id="KW-0131">Cell cycle</keyword>
<keyword id="KW-0132">Cell division</keyword>
<keyword id="KW-0963">Cytoplasm</keyword>
<keyword id="KW-0206">Cytoskeleton</keyword>
<keyword id="KW-0903">Direct protein sequencing</keyword>
<keyword id="KW-0227">DNA damage</keyword>
<keyword id="KW-0234">DNA repair</keyword>
<keyword id="KW-0238">DNA-binding</keyword>
<keyword id="KW-1017">Isopeptide bond</keyword>
<keyword id="KW-0456">Lyase</keyword>
<keyword id="KW-0472">Membrane</keyword>
<keyword id="KW-0488">Methylation</keyword>
<keyword id="KW-0496">Mitochondrion</keyword>
<keyword id="KW-0999">Mitochondrion inner membrane</keyword>
<keyword id="KW-0498">Mitosis</keyword>
<keyword id="KW-0539">Nucleus</keyword>
<keyword id="KW-0597">Phosphoprotein</keyword>
<keyword id="KW-1185">Reference proteome</keyword>
<keyword id="KW-0687">Ribonucleoprotein</keyword>
<keyword id="KW-0689">Ribosomal protein</keyword>
<keyword id="KW-0694">RNA-binding</keyword>
<keyword id="KW-0804">Transcription</keyword>
<keyword id="KW-0805">Transcription regulation</keyword>
<keyword id="KW-0810">Translation regulation</keyword>
<keyword id="KW-0832">Ubl conjugation</keyword>
<organism>
    <name type="scientific">Mus musculus</name>
    <name type="common">Mouse</name>
    <dbReference type="NCBI Taxonomy" id="10090"/>
    <lineage>
        <taxon>Eukaryota</taxon>
        <taxon>Metazoa</taxon>
        <taxon>Chordata</taxon>
        <taxon>Craniata</taxon>
        <taxon>Vertebrata</taxon>
        <taxon>Euteleostomi</taxon>
        <taxon>Mammalia</taxon>
        <taxon>Eutheria</taxon>
        <taxon>Euarchontoglires</taxon>
        <taxon>Glires</taxon>
        <taxon>Rodentia</taxon>
        <taxon>Myomorpha</taxon>
        <taxon>Muroidea</taxon>
        <taxon>Muridae</taxon>
        <taxon>Murinae</taxon>
        <taxon>Mus</taxon>
        <taxon>Mus</taxon>
    </lineage>
</organism>
<feature type="initiator methionine" description="Removed" evidence="1">
    <location>
        <position position="1"/>
    </location>
</feature>
<feature type="chain" id="PRO_0000130321" description="Small ribosomal subunit protein uS3">
    <location>
        <begin position="2"/>
        <end position="243"/>
    </location>
</feature>
<feature type="domain" description="KH type-2" evidence="2">
    <location>
        <begin position="21"/>
        <end position="92"/>
    </location>
</feature>
<feature type="region of interest" description="Disordered" evidence="3">
    <location>
        <begin position="200"/>
        <end position="243"/>
    </location>
</feature>
<feature type="compositionally biased region" description="Pro residues" evidence="3">
    <location>
        <begin position="231"/>
        <end position="243"/>
    </location>
</feature>
<feature type="modified residue" description="N-acetylalanine" evidence="1">
    <location>
        <position position="2"/>
    </location>
</feature>
<feature type="modified residue" description="Phosphoserine; by PKC/PRKCD" evidence="1">
    <location>
        <position position="6"/>
    </location>
</feature>
<feature type="modified residue" description="Phosphoserine" evidence="1">
    <location>
        <position position="35"/>
    </location>
</feature>
<feature type="modified residue" description="Phosphothreonine; by MAPK" evidence="1">
    <location>
        <position position="42"/>
    </location>
</feature>
<feature type="modified residue" description="N6-acetyllysine" evidence="1">
    <location>
        <position position="62"/>
    </location>
</feature>
<feature type="modified residue" description="Asymmetric dimethylarginine; by PRMT1" evidence="1">
    <location>
        <position position="64"/>
    </location>
</feature>
<feature type="modified residue" description="Asymmetric dimethylarginine; by PRMT1" evidence="1">
    <location>
        <position position="65"/>
    </location>
</feature>
<feature type="modified residue" description="Asymmetric dimethylarginine; by PRMT1" evidence="1">
    <location>
        <position position="67"/>
    </location>
</feature>
<feature type="modified residue" description="Phosphothreonine; by PKB" evidence="1">
    <location>
        <position position="70"/>
    </location>
</feature>
<feature type="modified residue" description="Phosphoserine" evidence="1">
    <location>
        <position position="104"/>
    </location>
</feature>
<feature type="modified residue" description="N6-succinyllysine" evidence="14">
    <location>
        <position position="132"/>
    </location>
</feature>
<feature type="modified residue" description="Phosphoserine; by IKKB" evidence="1">
    <location>
        <position position="209"/>
    </location>
</feature>
<feature type="modified residue" description="Phosphothreonine" evidence="1">
    <location>
        <position position="220"/>
    </location>
</feature>
<feature type="modified residue" description="Phosphothreonine" evidence="12 13">
    <location>
        <position position="221"/>
    </location>
</feature>
<feature type="modified residue" description="Phosphoserine" evidence="1">
    <location>
        <position position="224"/>
    </location>
</feature>
<feature type="modified residue" description="Phosphothreonine" evidence="13">
    <location>
        <position position="242"/>
    </location>
</feature>
<feature type="cross-link" description="Glycyl lysine isopeptide (Lys-Gly) (interchain with G-Cter in ubiquitin)" evidence="1">
    <location>
        <position position="90"/>
    </location>
</feature>
<feature type="cross-link" description="Glycyl lysine isopeptide (Lys-Gly) (interchain with G-Cter in ubiquitin)" evidence="1">
    <location>
        <position position="202"/>
    </location>
</feature>
<feature type="cross-link" description="Glycyl lysine isopeptide (Lys-Gly) (interchain with G-Cter in SUMO2); alternate" evidence="1">
    <location>
        <position position="214"/>
    </location>
</feature>
<feature type="cross-link" description="Glycyl lysine isopeptide (Lys-Gly) (interchain with G-Cter in ubiquitin); alternate" evidence="1">
    <location>
        <position position="214"/>
    </location>
</feature>
<feature type="cross-link" description="Glycyl lysine isopeptide (Lys-Gly) (interchain with G-Cter in SUMO2)" evidence="1">
    <location>
        <position position="230"/>
    </location>
</feature>
<accession>P62908</accession>
<accession>P17073</accession>
<accession>P47933</accession>
<comment type="function">
    <text evidence="1 4 7 8">Component of the small ribosomal subunit (PubMed:36517592). The ribosome is a large ribonucleoprotein complex responsible for the synthesis of proteins in the cell (PubMed:36517592). Has endonuclease activity and plays a role in repair of damaged DNA (PubMed:7775413). Cleaves phosphodiester bonds of DNAs containing altered bases with broad specificity and cleaves supercoiled DNA more efficiently than relaxed DNA (By similarity). Displays high binding affinity for 7,8-dihydro-8-oxoguanine (8-oxoG), a common DNA lesion caused by reactive oxygen species (ROS) (By similarity). Has also been shown to bind with similar affinity to intact and damaged DNA (By similarity). Stimulates the N-glycosylase activity of the base excision protein OGG1 (By similarity). Enhances the uracil excision activity of UNG1 (By similarity). Also stimulates the cleavage of the phosphodiester backbone by APEX1 (By similarity). When located in the mitochondrion, reduces cellular ROS levels and mitochondrial DNA damage (By similarity). Has also been shown to negatively regulate DNA repair in cells exposed to hydrogen peroxide (By similarity). Plays a role in regulating transcription as part of the NF-kappa-B p65-p50 complex where it binds to the RELA/p65 subunit, enhances binding of the complex to DNA and promotes transcription of target genes (By similarity). Represses its own translation by binding to its cognate mRNA (By similarity). Binds to and protects TP53/p53 from MDM2-mediated ubiquitination (By similarity). Involved in spindle formation and chromosome movement during mitosis by regulating microtubule polymerization (By similarity). Involved in induction of apoptosis through its role in activation of CASP8 (PubMed:14988002). Induces neuronal apoptosis by interacting with the E2F1 transcription factor and acting synergistically with it to up-regulate pro-apoptotic proteins BCL2L11/BIM and HRK/Dp5 (By similarity). Interacts with TRADD following exposure to UV radiation and induces apoptosis by caspase-dependent JNK activation (By similarity).</text>
</comment>
<comment type="catalytic activity">
    <reaction evidence="8">
        <text>2'-deoxyribonucleotide-(2'-deoxyribose 5'-phosphate)-2'-deoxyribonucleotide-DNA = a 3'-end 2'-deoxyribonucleotide-(2,3-dehydro-2,3-deoxyribose 5'-phosphate)-DNA + a 5'-end 5'-phospho-2'-deoxyribonucleoside-DNA + H(+)</text>
        <dbReference type="Rhea" id="RHEA:66592"/>
        <dbReference type="Rhea" id="RHEA-COMP:13180"/>
        <dbReference type="Rhea" id="RHEA-COMP:16897"/>
        <dbReference type="Rhea" id="RHEA-COMP:17067"/>
        <dbReference type="ChEBI" id="CHEBI:15378"/>
        <dbReference type="ChEBI" id="CHEBI:136412"/>
        <dbReference type="ChEBI" id="CHEBI:157695"/>
        <dbReference type="ChEBI" id="CHEBI:167181"/>
        <dbReference type="EC" id="4.2.99.18"/>
    </reaction>
</comment>
<comment type="subunit">
    <text evidence="1 5 7">Component of the 40S small ribosomal subunit (PubMed:36517592). Identified in a IGF2BP1-dependent mRNP granule complex containing untranslated mRNAs. Interacts with HNRPD. Interacts with PRMT1; the interaction methylates RPS3. Interacts with SUMO1; the interaction sumoylates RPS3. Interacts with UBC9. Interacts with CDK1; the interaction phosphorylates RPS3. Interacts with PRKCD; the interaction phosphorylates RPS3. Interacts with PKB/AKT; the interaction phosphorylates RPS3. Interacts with E2F1; the interaction occurs in the absence of nerve growth factor and increases transcription of pro-apoptotic proteins BCL2L11/BIM and HRK/Dp5. Interacts with the base excision repair proteins APEX1 and OGG1; interaction with OGG1 increases OGG1 N-glycosylase activity. Interacts with UNG; the interaction increases the uracil excision activity of UNG1. Interacts with HSP90; the interaction prevents the ubiquitination and proteasome-dependent degradation of RPS3 and is suppressed by increased ROS levels. Interacts with TOM70; the interaction promotes translocation of RPS3 to the mitochondrion. Interacts (via N-terminus) with RELA (via N-terminus); the interaction enhances the DNA-binding activity of the NF-kappa-B p65-p50 complex. Interacts with NFKBIA; the interaction is direct and may bridge the interaction between RPS3 and RELA. Interacts with IKKB; the interaction phosphorylates RPS3 and enhances its translocation to the nucleus. Interacts (via KH domain) with MDM2 and TP53. Interacts with TRADD. Interacts with CRY1.</text>
</comment>
<comment type="subcellular location">
    <subcellularLocation>
        <location evidence="4 7">Cytoplasm</location>
    </subcellularLocation>
    <subcellularLocation>
        <location evidence="4">Nucleus</location>
    </subcellularLocation>
    <subcellularLocation>
        <location evidence="1">Nucleus</location>
        <location evidence="1">Nucleolus</location>
    </subcellularLocation>
    <subcellularLocation>
        <location evidence="1">Mitochondrion inner membrane</location>
        <topology evidence="1">Peripheral membrane protein</topology>
    </subcellularLocation>
    <subcellularLocation>
        <location evidence="1">Cytoplasm</location>
        <location evidence="1">Cytoskeleton</location>
        <location evidence="1">Spindle</location>
    </subcellularLocation>
    <text evidence="1 4">In normal cells, located mainly in the cytoplasm with small amounts in the nucleus but translocates to the nucleus in cells undergoing apoptosis. Nuclear translocation is also induced by DNA damaging agents such as hydrogen peroxide (By similarity). Accumulates in the mitochondrion in response to increased ROS levels (By similarity). Localizes to the spindle during mitosis (By similarity). Localized in cytoplasmic mRNP granules containing untranslated mRNAs (By similarity).</text>
</comment>
<comment type="PTM">
    <text evidence="1">Methylation by PRMT1 is required for import into the nucleolus and for ribosome assembly.</text>
</comment>
<comment type="PTM">
    <text evidence="1">Sumoylation by SUMO1 enhances protein stability through increased resistance to proteolysis. Sumoylation occurs at one or more of the three consensus sites, Lys-18, Lys-214 and Lys-230.</text>
</comment>
<comment type="PTM">
    <text evidence="1">Phosphorylation at Thr-221 by CDK1 occurs mainly in G2/M phase. Phosphorylation by PRKCD occurs on a non-ribosomal-associated form which results in translocation of RPS3 to the nucleus and enhances its endonuclease activity. Phosphorylated on Ser-209 by IKKB in response to activation of the NF-kappa-B p65-p50 complex which enhances the association of RPS3 with importin-alpha and mediates the nuclear translocation of RPS3. Phosphorylation by MAPK is required for translocation to the nucleus following exposure of cells to DNA damaging agents such as hydrogen peroxide. Phosphorylation by PKB/AKT mediates RPS3 nuclear translocation, enhances RPS3 endonuclease activity and suppresses RPS3-induced neuronal apoptosis.</text>
</comment>
<comment type="PTM">
    <text evidence="1">Ubiquitinated; ubiquitination is prevented by interaction with HSP90 which stabilizes the protein. Monoubiquitinated at Lys-214 by RNF10 and ZNF598 when a ribosome has stalled during translation of poly(A) sequences, leading to preclude synthesis of a long poly-lysine tail and initiate the ribosome quality control (RQC) pathway to degrade the potentially detrimental aberrant nascent polypeptide. Deubiquitinated at Lys-214 by USP10, preventing degradation by the proteasome and promoting 40S ribosome subunit recycling following ribosome dissociation.</text>
</comment>
<comment type="PTM">
    <text evidence="6">Ufmylated by UFL1.</text>
</comment>
<comment type="similarity">
    <text evidence="9">Belongs to the universal ribosomal protein uS3 family.</text>
</comment>
<reference key="1">
    <citation type="submission" date="1993-12" db="EMBL/GenBank/DDBJ databases">
        <title>Primary sequence of the mouse ribosomal protein S3.</title>
        <authorList>
            <person name="Harper M."/>
            <person name="Terol-Garay E."/>
            <person name="Hraba-Renevey S."/>
            <person name="Kress M.M."/>
        </authorList>
    </citation>
    <scope>NUCLEOTIDE SEQUENCE [MRNA]</scope>
    <source>
        <tissue>Kidney</tissue>
    </source>
</reference>
<reference key="2">
    <citation type="journal article" date="2004" name="Genome Res.">
        <title>The status, quality, and expansion of the NIH full-length cDNA project: the Mammalian Gene Collection (MGC).</title>
        <authorList>
            <consortium name="The MGC Project Team"/>
        </authorList>
    </citation>
    <scope>NUCLEOTIDE SEQUENCE [LARGE SCALE MRNA]</scope>
    <source>
        <strain>C57BL/6J</strain>
        <tissue>Mammary gland</tissue>
    </source>
</reference>
<reference key="3">
    <citation type="journal article" date="1995" name="J. Biol. Chem.">
        <title>Implication of mammalian ribosomal protein S3 in the processing of DNA damage.</title>
        <authorList>
            <person name="Kim J."/>
            <person name="Chubatsu L.S."/>
            <person name="Admon A."/>
            <person name="Stahl J."/>
            <person name="Fellous R."/>
            <person name="Linn S."/>
        </authorList>
    </citation>
    <scope>PROTEIN SEQUENCE OF 75-81 AND 227-240</scope>
    <scope>FUNCTION</scope>
    <scope>CATALYTIC ACTIVITY</scope>
</reference>
<reference key="4">
    <citation type="journal article" date="2004" name="FEBS Lett.">
        <title>RpS3, a DNA repair endonuclease and ribosomal protein, is involved in apoptosis.</title>
        <authorList>
            <person name="Jang C.Y."/>
            <person name="Lee J.Y."/>
            <person name="Kim J."/>
        </authorList>
    </citation>
    <scope>FUNCTION</scope>
    <scope>SUBCELLULAR LOCATION</scope>
</reference>
<reference key="5">
    <citation type="journal article" date="2007" name="Proc. Natl. Acad. Sci. U.S.A.">
        <title>Large-scale phosphorylation analysis of mouse liver.</title>
        <authorList>
            <person name="Villen J."/>
            <person name="Beausoleil S.A."/>
            <person name="Gerber S.A."/>
            <person name="Gygi S.P."/>
        </authorList>
    </citation>
    <scope>PHOSPHORYLATION [LARGE SCALE ANALYSIS] AT THR-221</scope>
    <scope>IDENTIFICATION BY MASS SPECTROMETRY [LARGE SCALE ANALYSIS]</scope>
    <source>
        <tissue>Liver</tissue>
    </source>
</reference>
<reference key="6">
    <citation type="journal article" date="2009" name="Immunity">
        <title>The phagosomal proteome in interferon-gamma-activated macrophages.</title>
        <authorList>
            <person name="Trost M."/>
            <person name="English L."/>
            <person name="Lemieux S."/>
            <person name="Courcelles M."/>
            <person name="Desjardins M."/>
            <person name="Thibault P."/>
        </authorList>
    </citation>
    <scope>IDENTIFICATION BY MASS SPECTROMETRY [LARGE SCALE ANALYSIS]</scope>
</reference>
<reference key="7">
    <citation type="journal article" date="2009" name="Nucleic Acids Res.">
        <title>Molecular characterization of Mybbp1a as a co-repressor on the Period2 promoter.</title>
        <authorList>
            <person name="Hara Y."/>
            <person name="Onishi Y."/>
            <person name="Oishi K."/>
            <person name="Miyazaki K."/>
            <person name="Fukamizu A."/>
            <person name="Ishida N."/>
        </authorList>
    </citation>
    <scope>INTERACTION WITH CRY1</scope>
</reference>
<reference key="8">
    <citation type="journal article" date="2010" name="Cell">
        <title>A tissue-specific atlas of mouse protein phosphorylation and expression.</title>
        <authorList>
            <person name="Huttlin E.L."/>
            <person name="Jedrychowski M.P."/>
            <person name="Elias J.E."/>
            <person name="Goswami T."/>
            <person name="Rad R."/>
            <person name="Beausoleil S.A."/>
            <person name="Villen J."/>
            <person name="Haas W."/>
            <person name="Sowa M.E."/>
            <person name="Gygi S.P."/>
        </authorList>
    </citation>
    <scope>PHOSPHORYLATION [LARGE SCALE ANALYSIS] AT THR-221 AND THR-242</scope>
    <scope>IDENTIFICATION BY MASS SPECTROMETRY [LARGE SCALE ANALYSIS]</scope>
    <source>
        <tissue>Brain</tissue>
        <tissue>Brown adipose tissue</tissue>
        <tissue>Heart</tissue>
        <tissue>Kidney</tissue>
        <tissue>Liver</tissue>
        <tissue>Lung</tissue>
        <tissue>Pancreas</tissue>
        <tissue>Spleen</tissue>
        <tissue>Testis</tissue>
    </source>
</reference>
<reference key="9">
    <citation type="journal article" date="2013" name="Mol. Cell">
        <title>SIRT5-mediated lysine desuccinylation impacts diverse metabolic pathways.</title>
        <authorList>
            <person name="Park J."/>
            <person name="Chen Y."/>
            <person name="Tishkoff D.X."/>
            <person name="Peng C."/>
            <person name="Tan M."/>
            <person name="Dai L."/>
            <person name="Xie Z."/>
            <person name="Zhang Y."/>
            <person name="Zwaans B.M."/>
            <person name="Skinner M.E."/>
            <person name="Lombard D.B."/>
            <person name="Zhao Y."/>
        </authorList>
    </citation>
    <scope>SUCCINYLATION [LARGE SCALE ANALYSIS] AT LYS-132</scope>
    <scope>IDENTIFICATION BY MASS SPECTROMETRY [LARGE SCALE ANALYSIS]</scope>
    <source>
        <tissue>Liver</tissue>
    </source>
</reference>
<reference key="10">
    <citation type="journal article" date="2017" name="Cell">
        <title>The mammalian ribo-interactome reveals ribosome functional diversity and heterogeneity.</title>
        <authorList>
            <person name="Simsek D."/>
            <person name="Tiu G.C."/>
            <person name="Flynn R.A."/>
            <person name="Byeon G.W."/>
            <person name="Leppek K."/>
            <person name="Xu A.F."/>
            <person name="Chang H.Y."/>
            <person name="Barna M."/>
        </authorList>
    </citation>
    <scope>UFMYLATION</scope>
</reference>
<reference evidence="10 11" key="11">
    <citation type="journal article" date="2022" name="Nature">
        <title>A male germ-cell-specific ribosome controls male fertility.</title>
        <authorList>
            <person name="Li H."/>
            <person name="Huo Y."/>
            <person name="He X."/>
            <person name="Yao L."/>
            <person name="Zhang H."/>
            <person name="Cui Y."/>
            <person name="Xiao H."/>
            <person name="Xie W."/>
            <person name="Zhang D."/>
            <person name="Wang Y."/>
            <person name="Zhang S."/>
            <person name="Tu H."/>
            <person name="Cheng Y."/>
            <person name="Guo Y."/>
            <person name="Cao X."/>
            <person name="Zhu Y."/>
            <person name="Jiang T."/>
            <person name="Guo X."/>
            <person name="Qin Y."/>
            <person name="Sha J."/>
        </authorList>
    </citation>
    <scope>STRUCTURE BY ELECTRON MICROSCOPY (3.03 ANGSTROMS) OF RIBOSOME</scope>
    <scope>FUNCTION</scope>
    <scope>SUBUNIT</scope>
    <scope>SUBCELLULAR LOCATION</scope>
</reference>
<proteinExistence type="evidence at protein level"/>
<gene>
    <name type="primary">Rps3</name>
</gene>
<protein>
    <recommendedName>
        <fullName evidence="9">Small ribosomal subunit protein uS3</fullName>
        <ecNumber evidence="8">4.2.99.18</ecNumber>
    </recommendedName>
    <alternativeName>
        <fullName>40S ribosomal protein S3</fullName>
    </alternativeName>
</protein>